<dbReference type="EC" id="3.1.1.29" evidence="1"/>
<dbReference type="EMBL" id="CP000554">
    <property type="protein sequence ID" value="ABM79191.1"/>
    <property type="molecule type" value="Genomic_DNA"/>
</dbReference>
<dbReference type="RefSeq" id="WP_011827043.1">
    <property type="nucleotide sequence ID" value="NC_008820.1"/>
</dbReference>
<dbReference type="SMR" id="A2CCI1"/>
<dbReference type="STRING" id="59922.P9303_24601"/>
<dbReference type="KEGG" id="pmf:P9303_24601"/>
<dbReference type="HOGENOM" id="CLU_062456_3_1_3"/>
<dbReference type="BioCyc" id="PMAR59922:G1G80-2151-MONOMER"/>
<dbReference type="Proteomes" id="UP000002274">
    <property type="component" value="Chromosome"/>
</dbReference>
<dbReference type="GO" id="GO:0005737">
    <property type="term" value="C:cytoplasm"/>
    <property type="evidence" value="ECO:0007669"/>
    <property type="project" value="UniProtKB-SubCell"/>
</dbReference>
<dbReference type="GO" id="GO:0004045">
    <property type="term" value="F:peptidyl-tRNA hydrolase activity"/>
    <property type="evidence" value="ECO:0007669"/>
    <property type="project" value="UniProtKB-UniRule"/>
</dbReference>
<dbReference type="GO" id="GO:0000049">
    <property type="term" value="F:tRNA binding"/>
    <property type="evidence" value="ECO:0007669"/>
    <property type="project" value="UniProtKB-UniRule"/>
</dbReference>
<dbReference type="GO" id="GO:0006515">
    <property type="term" value="P:protein quality control for misfolded or incompletely synthesized proteins"/>
    <property type="evidence" value="ECO:0007669"/>
    <property type="project" value="UniProtKB-UniRule"/>
</dbReference>
<dbReference type="GO" id="GO:0072344">
    <property type="term" value="P:rescue of stalled ribosome"/>
    <property type="evidence" value="ECO:0007669"/>
    <property type="project" value="UniProtKB-UniRule"/>
</dbReference>
<dbReference type="CDD" id="cd00462">
    <property type="entry name" value="PTH"/>
    <property type="match status" value="1"/>
</dbReference>
<dbReference type="FunFam" id="3.40.50.1470:FF:000001">
    <property type="entry name" value="Peptidyl-tRNA hydrolase"/>
    <property type="match status" value="1"/>
</dbReference>
<dbReference type="Gene3D" id="3.40.50.1470">
    <property type="entry name" value="Peptidyl-tRNA hydrolase"/>
    <property type="match status" value="1"/>
</dbReference>
<dbReference type="HAMAP" id="MF_00083">
    <property type="entry name" value="Pept_tRNA_hydro_bact"/>
    <property type="match status" value="1"/>
</dbReference>
<dbReference type="InterPro" id="IPR001328">
    <property type="entry name" value="Pept_tRNA_hydro"/>
</dbReference>
<dbReference type="InterPro" id="IPR018171">
    <property type="entry name" value="Pept_tRNA_hydro_CS"/>
</dbReference>
<dbReference type="InterPro" id="IPR036416">
    <property type="entry name" value="Pept_tRNA_hydro_sf"/>
</dbReference>
<dbReference type="NCBIfam" id="TIGR00447">
    <property type="entry name" value="pth"/>
    <property type="match status" value="1"/>
</dbReference>
<dbReference type="PANTHER" id="PTHR17224">
    <property type="entry name" value="PEPTIDYL-TRNA HYDROLASE"/>
    <property type="match status" value="1"/>
</dbReference>
<dbReference type="PANTHER" id="PTHR17224:SF1">
    <property type="entry name" value="PEPTIDYL-TRNA HYDROLASE"/>
    <property type="match status" value="1"/>
</dbReference>
<dbReference type="Pfam" id="PF01195">
    <property type="entry name" value="Pept_tRNA_hydro"/>
    <property type="match status" value="1"/>
</dbReference>
<dbReference type="SUPFAM" id="SSF53178">
    <property type="entry name" value="Peptidyl-tRNA hydrolase-like"/>
    <property type="match status" value="1"/>
</dbReference>
<dbReference type="PROSITE" id="PS01195">
    <property type="entry name" value="PEPT_TRNA_HYDROL_1"/>
    <property type="match status" value="1"/>
</dbReference>
<gene>
    <name evidence="1" type="primary">pth</name>
    <name type="ordered locus">P9303_24601</name>
</gene>
<sequence>MRPGRLRLLVGLGNPGSKYVGTRHNIGFMALDKLAGQKSVSFRPQTKFHGLMAEVGVGSERVRLLMPQTYMNESGRAIRAAIDWFGLEVDQLLVLVDDMDLPLGRLRLRAQGSAGGHNGLRSAIQHLGTQDFCRLRIGIGAPGCTSEERRARTVSHVLGVFSRQESLLVDQVLDEVLIGLDLIQCLGLERAGNRLNAFQPEGCSAC</sequence>
<name>PTH_PROM3</name>
<comment type="function">
    <text evidence="1">Hydrolyzes ribosome-free peptidyl-tRNAs (with 1 or more amino acids incorporated), which drop off the ribosome during protein synthesis, or as a result of ribosome stalling.</text>
</comment>
<comment type="function">
    <text evidence="1">Catalyzes the release of premature peptidyl moieties from peptidyl-tRNA molecules trapped in stalled 50S ribosomal subunits, and thus maintains levels of free tRNAs and 50S ribosomes.</text>
</comment>
<comment type="catalytic activity">
    <reaction evidence="1">
        <text>an N-acyl-L-alpha-aminoacyl-tRNA + H2O = an N-acyl-L-amino acid + a tRNA + H(+)</text>
        <dbReference type="Rhea" id="RHEA:54448"/>
        <dbReference type="Rhea" id="RHEA-COMP:10123"/>
        <dbReference type="Rhea" id="RHEA-COMP:13883"/>
        <dbReference type="ChEBI" id="CHEBI:15377"/>
        <dbReference type="ChEBI" id="CHEBI:15378"/>
        <dbReference type="ChEBI" id="CHEBI:59874"/>
        <dbReference type="ChEBI" id="CHEBI:78442"/>
        <dbReference type="ChEBI" id="CHEBI:138191"/>
        <dbReference type="EC" id="3.1.1.29"/>
    </reaction>
</comment>
<comment type="subunit">
    <text evidence="1">Monomer.</text>
</comment>
<comment type="subcellular location">
    <subcellularLocation>
        <location evidence="1">Cytoplasm</location>
    </subcellularLocation>
</comment>
<comment type="similarity">
    <text evidence="1">Belongs to the PTH family.</text>
</comment>
<reference key="1">
    <citation type="journal article" date="2007" name="PLoS Genet.">
        <title>Patterns and implications of gene gain and loss in the evolution of Prochlorococcus.</title>
        <authorList>
            <person name="Kettler G.C."/>
            <person name="Martiny A.C."/>
            <person name="Huang K."/>
            <person name="Zucker J."/>
            <person name="Coleman M.L."/>
            <person name="Rodrigue S."/>
            <person name="Chen F."/>
            <person name="Lapidus A."/>
            <person name="Ferriera S."/>
            <person name="Johnson J."/>
            <person name="Steglich C."/>
            <person name="Church G.M."/>
            <person name="Richardson P."/>
            <person name="Chisholm S.W."/>
        </authorList>
    </citation>
    <scope>NUCLEOTIDE SEQUENCE [LARGE SCALE GENOMIC DNA]</scope>
    <source>
        <strain>MIT 9303</strain>
    </source>
</reference>
<evidence type="ECO:0000255" key="1">
    <source>
        <dbReference type="HAMAP-Rule" id="MF_00083"/>
    </source>
</evidence>
<organism>
    <name type="scientific">Prochlorococcus marinus (strain MIT 9303)</name>
    <dbReference type="NCBI Taxonomy" id="59922"/>
    <lineage>
        <taxon>Bacteria</taxon>
        <taxon>Bacillati</taxon>
        <taxon>Cyanobacteriota</taxon>
        <taxon>Cyanophyceae</taxon>
        <taxon>Synechococcales</taxon>
        <taxon>Prochlorococcaceae</taxon>
        <taxon>Prochlorococcus</taxon>
    </lineage>
</organism>
<protein>
    <recommendedName>
        <fullName evidence="1">Peptidyl-tRNA hydrolase</fullName>
        <shortName evidence="1">Pth</shortName>
        <ecNumber evidence="1">3.1.1.29</ecNumber>
    </recommendedName>
</protein>
<accession>A2CCI1</accession>
<feature type="chain" id="PRO_1000010627" description="Peptidyl-tRNA hydrolase">
    <location>
        <begin position="1"/>
        <end position="206"/>
    </location>
</feature>
<feature type="active site" description="Proton acceptor" evidence="1">
    <location>
        <position position="24"/>
    </location>
</feature>
<feature type="binding site" evidence="1">
    <location>
        <position position="19"/>
    </location>
    <ligand>
        <name>tRNA</name>
        <dbReference type="ChEBI" id="CHEBI:17843"/>
    </ligand>
</feature>
<feature type="binding site" evidence="1">
    <location>
        <position position="70"/>
    </location>
    <ligand>
        <name>tRNA</name>
        <dbReference type="ChEBI" id="CHEBI:17843"/>
    </ligand>
</feature>
<feature type="binding site" evidence="1">
    <location>
        <position position="72"/>
    </location>
    <ligand>
        <name>tRNA</name>
        <dbReference type="ChEBI" id="CHEBI:17843"/>
    </ligand>
</feature>
<feature type="binding site" evidence="1">
    <location>
        <position position="118"/>
    </location>
    <ligand>
        <name>tRNA</name>
        <dbReference type="ChEBI" id="CHEBI:17843"/>
    </ligand>
</feature>
<feature type="site" description="Discriminates between blocked and unblocked aminoacyl-tRNA" evidence="1">
    <location>
        <position position="14"/>
    </location>
</feature>
<feature type="site" description="Stabilizes the basic form of H active site to accept a proton" evidence="1">
    <location>
        <position position="97"/>
    </location>
</feature>
<proteinExistence type="inferred from homology"/>
<keyword id="KW-0963">Cytoplasm</keyword>
<keyword id="KW-0378">Hydrolase</keyword>
<keyword id="KW-0694">RNA-binding</keyword>
<keyword id="KW-0820">tRNA-binding</keyword>